<name>GMHA_YERPA</name>
<proteinExistence type="inferred from homology"/>
<gene>
    <name evidence="1" type="primary">gmhA</name>
    <name type="ordered locus">YPA_2734</name>
</gene>
<feature type="chain" id="PRO_1000009104" description="Phosphoheptose isomerase">
    <location>
        <begin position="1"/>
        <end position="193"/>
    </location>
</feature>
<feature type="domain" description="SIS" evidence="1">
    <location>
        <begin position="37"/>
        <end position="193"/>
    </location>
</feature>
<feature type="binding site" evidence="1">
    <location>
        <begin position="52"/>
        <end position="54"/>
    </location>
    <ligand>
        <name>substrate</name>
    </ligand>
</feature>
<feature type="binding site" evidence="1">
    <location>
        <position position="61"/>
    </location>
    <ligand>
        <name>Zn(2+)</name>
        <dbReference type="ChEBI" id="CHEBI:29105"/>
    </ligand>
</feature>
<feature type="binding site" evidence="1">
    <location>
        <position position="65"/>
    </location>
    <ligand>
        <name>substrate</name>
    </ligand>
</feature>
<feature type="binding site" evidence="1">
    <location>
        <position position="65"/>
    </location>
    <ligand>
        <name>Zn(2+)</name>
        <dbReference type="ChEBI" id="CHEBI:29105"/>
    </ligand>
</feature>
<feature type="binding site" evidence="1">
    <location>
        <begin position="93"/>
        <end position="94"/>
    </location>
    <ligand>
        <name>substrate</name>
    </ligand>
</feature>
<feature type="binding site" evidence="1">
    <location>
        <begin position="119"/>
        <end position="121"/>
    </location>
    <ligand>
        <name>substrate</name>
    </ligand>
</feature>
<feature type="binding site" evidence="1">
    <location>
        <position position="124"/>
    </location>
    <ligand>
        <name>substrate</name>
    </ligand>
</feature>
<feature type="binding site" evidence="1">
    <location>
        <position position="172"/>
    </location>
    <ligand>
        <name>substrate</name>
    </ligand>
</feature>
<feature type="binding site" evidence="1">
    <location>
        <position position="172"/>
    </location>
    <ligand>
        <name>Zn(2+)</name>
        <dbReference type="ChEBI" id="CHEBI:29105"/>
    </ligand>
</feature>
<feature type="binding site" evidence="1">
    <location>
        <position position="180"/>
    </location>
    <ligand>
        <name>Zn(2+)</name>
        <dbReference type="ChEBI" id="CHEBI:29105"/>
    </ligand>
</feature>
<sequence length="193" mass="20929">MYHDLIRSELNEAADTLANFLKDDSNIDAIQRAAILLADSFKAGGKVLSCGNGGSHCDAMHFAEELTGRYRENRPGYPAIAISDVSHLSCVSNDFGYDYVFSRYVEAVGREGDVLLGISTSGNSGNIIKAIEAARAKGMKVITLTGKDGGKMAGSADIEIRVPHFGYADRIQEIHIKVIHILIQLIEKEMVKA</sequence>
<evidence type="ECO:0000255" key="1">
    <source>
        <dbReference type="HAMAP-Rule" id="MF_00067"/>
    </source>
</evidence>
<protein>
    <recommendedName>
        <fullName evidence="1">Phosphoheptose isomerase</fullName>
        <ecNumber evidence="1">5.3.1.28</ecNumber>
    </recommendedName>
    <alternativeName>
        <fullName evidence="1">Sedoheptulose 7-phosphate isomerase</fullName>
    </alternativeName>
</protein>
<comment type="function">
    <text evidence="1">Catalyzes the isomerization of sedoheptulose 7-phosphate in D-glycero-D-manno-heptose 7-phosphate.</text>
</comment>
<comment type="catalytic activity">
    <reaction evidence="1">
        <text>2 D-sedoheptulose 7-phosphate = D-glycero-alpha-D-manno-heptose 7-phosphate + D-glycero-beta-D-manno-heptose 7-phosphate</text>
        <dbReference type="Rhea" id="RHEA:27489"/>
        <dbReference type="ChEBI" id="CHEBI:57483"/>
        <dbReference type="ChEBI" id="CHEBI:60203"/>
        <dbReference type="ChEBI" id="CHEBI:60204"/>
        <dbReference type="EC" id="5.3.1.28"/>
    </reaction>
</comment>
<comment type="cofactor">
    <cofactor evidence="1">
        <name>Zn(2+)</name>
        <dbReference type="ChEBI" id="CHEBI:29105"/>
    </cofactor>
    <text evidence="1">Binds 1 zinc ion per subunit.</text>
</comment>
<comment type="pathway">
    <text evidence="1">Carbohydrate biosynthesis; D-glycero-D-manno-heptose 7-phosphate biosynthesis; D-glycero-alpha-D-manno-heptose 7-phosphate and D-glycero-beta-D-manno-heptose 7-phosphate from sedoheptulose 7-phosphate: step 1/1.</text>
</comment>
<comment type="subunit">
    <text evidence="1">Homotetramer.</text>
</comment>
<comment type="subcellular location">
    <subcellularLocation>
        <location evidence="1">Cytoplasm</location>
    </subcellularLocation>
</comment>
<comment type="miscellaneous">
    <text evidence="1">The reaction produces a racemic mixture of D-glycero-alpha-D-manno-heptose 7-phosphate and D-glycero-beta-D-manno-heptose 7-phosphate.</text>
</comment>
<comment type="similarity">
    <text evidence="1">Belongs to the SIS family. GmhA subfamily.</text>
</comment>
<reference key="1">
    <citation type="journal article" date="2006" name="J. Bacteriol.">
        <title>Complete genome sequence of Yersinia pestis strains Antiqua and Nepal516: evidence of gene reduction in an emerging pathogen.</title>
        <authorList>
            <person name="Chain P.S.G."/>
            <person name="Hu P."/>
            <person name="Malfatti S.A."/>
            <person name="Radnedge L."/>
            <person name="Larimer F."/>
            <person name="Vergez L.M."/>
            <person name="Worsham P."/>
            <person name="Chu M.C."/>
            <person name="Andersen G.L."/>
        </authorList>
    </citation>
    <scope>NUCLEOTIDE SEQUENCE [LARGE SCALE GENOMIC DNA]</scope>
    <source>
        <strain>Antiqua</strain>
    </source>
</reference>
<dbReference type="EC" id="5.3.1.28" evidence="1"/>
<dbReference type="EMBL" id="CP000308">
    <property type="protein sequence ID" value="ABG14696.1"/>
    <property type="molecule type" value="Genomic_DNA"/>
</dbReference>
<dbReference type="SMR" id="Q1C4C6"/>
<dbReference type="KEGG" id="ypa:YPA_2734"/>
<dbReference type="UniPathway" id="UPA00041">
    <property type="reaction ID" value="UER00436"/>
</dbReference>
<dbReference type="Proteomes" id="UP000001971">
    <property type="component" value="Chromosome"/>
</dbReference>
<dbReference type="GO" id="GO:0005737">
    <property type="term" value="C:cytoplasm"/>
    <property type="evidence" value="ECO:0007669"/>
    <property type="project" value="UniProtKB-SubCell"/>
</dbReference>
<dbReference type="GO" id="GO:0097367">
    <property type="term" value="F:carbohydrate derivative binding"/>
    <property type="evidence" value="ECO:0007669"/>
    <property type="project" value="InterPro"/>
</dbReference>
<dbReference type="GO" id="GO:0008968">
    <property type="term" value="F:D-sedoheptulose 7-phosphate isomerase activity"/>
    <property type="evidence" value="ECO:0007669"/>
    <property type="project" value="UniProtKB-UniRule"/>
</dbReference>
<dbReference type="GO" id="GO:0008270">
    <property type="term" value="F:zinc ion binding"/>
    <property type="evidence" value="ECO:0007669"/>
    <property type="project" value="UniProtKB-UniRule"/>
</dbReference>
<dbReference type="GO" id="GO:0005975">
    <property type="term" value="P:carbohydrate metabolic process"/>
    <property type="evidence" value="ECO:0007669"/>
    <property type="project" value="UniProtKB-UniRule"/>
</dbReference>
<dbReference type="GO" id="GO:2001061">
    <property type="term" value="P:D-glycero-D-manno-heptose 7-phosphate biosynthetic process"/>
    <property type="evidence" value="ECO:0007669"/>
    <property type="project" value="UniProtKB-UniPathway"/>
</dbReference>
<dbReference type="CDD" id="cd05006">
    <property type="entry name" value="SIS_GmhA"/>
    <property type="match status" value="1"/>
</dbReference>
<dbReference type="FunFam" id="3.40.50.10490:FF:000013">
    <property type="entry name" value="Phosphoheptose isomerase"/>
    <property type="match status" value="1"/>
</dbReference>
<dbReference type="Gene3D" id="3.40.50.10490">
    <property type="entry name" value="Glucose-6-phosphate isomerase like protein, domain 1"/>
    <property type="match status" value="1"/>
</dbReference>
<dbReference type="HAMAP" id="MF_00067">
    <property type="entry name" value="GmhA"/>
    <property type="match status" value="1"/>
</dbReference>
<dbReference type="InterPro" id="IPR035461">
    <property type="entry name" value="GmhA/DiaA"/>
</dbReference>
<dbReference type="InterPro" id="IPR004515">
    <property type="entry name" value="Phosphoheptose_Isoase"/>
</dbReference>
<dbReference type="InterPro" id="IPR001347">
    <property type="entry name" value="SIS_dom"/>
</dbReference>
<dbReference type="InterPro" id="IPR046348">
    <property type="entry name" value="SIS_dom_sf"/>
</dbReference>
<dbReference type="InterPro" id="IPR050099">
    <property type="entry name" value="SIS_GmhA/DiaA_subfam"/>
</dbReference>
<dbReference type="NCBIfam" id="TIGR00441">
    <property type="entry name" value="gmhA"/>
    <property type="match status" value="1"/>
</dbReference>
<dbReference type="NCBIfam" id="NF001628">
    <property type="entry name" value="PRK00414.1"/>
    <property type="match status" value="1"/>
</dbReference>
<dbReference type="PANTHER" id="PTHR30390:SF7">
    <property type="entry name" value="PHOSPHOHEPTOSE ISOMERASE"/>
    <property type="match status" value="1"/>
</dbReference>
<dbReference type="PANTHER" id="PTHR30390">
    <property type="entry name" value="SEDOHEPTULOSE 7-PHOSPHATE ISOMERASE / DNAA INITIATOR-ASSOCIATING FACTOR FOR REPLICATION INITIATION"/>
    <property type="match status" value="1"/>
</dbReference>
<dbReference type="Pfam" id="PF13580">
    <property type="entry name" value="SIS_2"/>
    <property type="match status" value="1"/>
</dbReference>
<dbReference type="SUPFAM" id="SSF53697">
    <property type="entry name" value="SIS domain"/>
    <property type="match status" value="1"/>
</dbReference>
<dbReference type="PROSITE" id="PS51464">
    <property type="entry name" value="SIS"/>
    <property type="match status" value="1"/>
</dbReference>
<accession>Q1C4C6</accession>
<organism>
    <name type="scientific">Yersinia pestis bv. Antiqua (strain Antiqua)</name>
    <dbReference type="NCBI Taxonomy" id="360102"/>
    <lineage>
        <taxon>Bacteria</taxon>
        <taxon>Pseudomonadati</taxon>
        <taxon>Pseudomonadota</taxon>
        <taxon>Gammaproteobacteria</taxon>
        <taxon>Enterobacterales</taxon>
        <taxon>Yersiniaceae</taxon>
        <taxon>Yersinia</taxon>
    </lineage>
</organism>
<keyword id="KW-0119">Carbohydrate metabolism</keyword>
<keyword id="KW-0963">Cytoplasm</keyword>
<keyword id="KW-0413">Isomerase</keyword>
<keyword id="KW-0479">Metal-binding</keyword>
<keyword id="KW-0862">Zinc</keyword>